<name>TATB_RALN1</name>
<reference key="1">
    <citation type="journal article" date="2002" name="Nature">
        <title>Genome sequence of the plant pathogen Ralstonia solanacearum.</title>
        <authorList>
            <person name="Salanoubat M."/>
            <person name="Genin S."/>
            <person name="Artiguenave F."/>
            <person name="Gouzy J."/>
            <person name="Mangenot S."/>
            <person name="Arlat M."/>
            <person name="Billault A."/>
            <person name="Brottier P."/>
            <person name="Camus J.-C."/>
            <person name="Cattolico L."/>
            <person name="Chandler M."/>
            <person name="Choisne N."/>
            <person name="Claudel-Renard C."/>
            <person name="Cunnac S."/>
            <person name="Demange N."/>
            <person name="Gaspin C."/>
            <person name="Lavie M."/>
            <person name="Moisan A."/>
            <person name="Robert C."/>
            <person name="Saurin W."/>
            <person name="Schiex T."/>
            <person name="Siguier P."/>
            <person name="Thebault P."/>
            <person name="Whalen M."/>
            <person name="Wincker P."/>
            <person name="Levy M."/>
            <person name="Weissenbach J."/>
            <person name="Boucher C.A."/>
        </authorList>
    </citation>
    <scope>NUCLEOTIDE SEQUENCE [LARGE SCALE GENOMIC DNA]</scope>
    <source>
        <strain>ATCC BAA-1114 / GMI1000</strain>
    </source>
</reference>
<protein>
    <recommendedName>
        <fullName evidence="1">Sec-independent protein translocase protein TatB</fullName>
    </recommendedName>
</protein>
<organism>
    <name type="scientific">Ralstonia nicotianae (strain ATCC BAA-1114 / GMI1000)</name>
    <name type="common">Ralstonia solanacearum</name>
    <dbReference type="NCBI Taxonomy" id="267608"/>
    <lineage>
        <taxon>Bacteria</taxon>
        <taxon>Pseudomonadati</taxon>
        <taxon>Pseudomonadota</taxon>
        <taxon>Betaproteobacteria</taxon>
        <taxon>Burkholderiales</taxon>
        <taxon>Burkholderiaceae</taxon>
        <taxon>Ralstonia</taxon>
        <taxon>Ralstonia solanacearum species complex</taxon>
    </lineage>
</organism>
<gene>
    <name evidence="1" type="primary">tatB</name>
    <name type="ordered locus">RSc2941</name>
    <name type="ORF">RS00148</name>
</gene>
<feature type="chain" id="PRO_0000192666" description="Sec-independent protein translocase protein TatB">
    <location>
        <begin position="1"/>
        <end position="172"/>
    </location>
</feature>
<feature type="transmembrane region" description="Helical" evidence="1">
    <location>
        <begin position="1"/>
        <end position="21"/>
    </location>
</feature>
<feature type="region of interest" description="Disordered" evidence="2">
    <location>
        <begin position="97"/>
        <end position="129"/>
    </location>
</feature>
<keyword id="KW-0997">Cell inner membrane</keyword>
<keyword id="KW-1003">Cell membrane</keyword>
<keyword id="KW-0472">Membrane</keyword>
<keyword id="KW-0653">Protein transport</keyword>
<keyword id="KW-1185">Reference proteome</keyword>
<keyword id="KW-0811">Translocation</keyword>
<keyword id="KW-0812">Transmembrane</keyword>
<keyword id="KW-1133">Transmembrane helix</keyword>
<keyword id="KW-0813">Transport</keyword>
<dbReference type="EMBL" id="AL646052">
    <property type="protein sequence ID" value="CAD16648.1"/>
    <property type="molecule type" value="Genomic_DNA"/>
</dbReference>
<dbReference type="RefSeq" id="WP_011002846.1">
    <property type="nucleotide sequence ID" value="NC_003295.1"/>
</dbReference>
<dbReference type="SMR" id="Q8XV90"/>
<dbReference type="STRING" id="267608.RSc2941"/>
<dbReference type="EnsemblBacteria" id="CAD16648">
    <property type="protein sequence ID" value="CAD16648"/>
    <property type="gene ID" value="RSc2941"/>
</dbReference>
<dbReference type="KEGG" id="rso:RSc2941"/>
<dbReference type="eggNOG" id="COG1826">
    <property type="taxonomic scope" value="Bacteria"/>
</dbReference>
<dbReference type="HOGENOM" id="CLU_086034_1_1_4"/>
<dbReference type="Proteomes" id="UP000001436">
    <property type="component" value="Chromosome"/>
</dbReference>
<dbReference type="GO" id="GO:0033281">
    <property type="term" value="C:TAT protein transport complex"/>
    <property type="evidence" value="ECO:0007669"/>
    <property type="project" value="UniProtKB-UniRule"/>
</dbReference>
<dbReference type="GO" id="GO:0008320">
    <property type="term" value="F:protein transmembrane transporter activity"/>
    <property type="evidence" value="ECO:0007669"/>
    <property type="project" value="UniProtKB-UniRule"/>
</dbReference>
<dbReference type="GO" id="GO:0043953">
    <property type="term" value="P:protein transport by the Tat complex"/>
    <property type="evidence" value="ECO:0007669"/>
    <property type="project" value="UniProtKB-UniRule"/>
</dbReference>
<dbReference type="Gene3D" id="1.20.5.3310">
    <property type="match status" value="1"/>
</dbReference>
<dbReference type="HAMAP" id="MF_00237">
    <property type="entry name" value="TatB"/>
    <property type="match status" value="1"/>
</dbReference>
<dbReference type="InterPro" id="IPR003369">
    <property type="entry name" value="TatA/B/E"/>
</dbReference>
<dbReference type="InterPro" id="IPR018448">
    <property type="entry name" value="TatB"/>
</dbReference>
<dbReference type="NCBIfam" id="TIGR01410">
    <property type="entry name" value="tatB"/>
    <property type="match status" value="1"/>
</dbReference>
<dbReference type="PANTHER" id="PTHR33162">
    <property type="entry name" value="SEC-INDEPENDENT PROTEIN TRANSLOCASE PROTEIN TATA, CHLOROPLASTIC"/>
    <property type="match status" value="1"/>
</dbReference>
<dbReference type="PANTHER" id="PTHR33162:SF1">
    <property type="entry name" value="SEC-INDEPENDENT PROTEIN TRANSLOCASE PROTEIN TATA, CHLOROPLASTIC"/>
    <property type="match status" value="1"/>
</dbReference>
<dbReference type="Pfam" id="PF02416">
    <property type="entry name" value="TatA_B_E"/>
    <property type="match status" value="1"/>
</dbReference>
<dbReference type="PRINTS" id="PR01506">
    <property type="entry name" value="TATBPROTEIN"/>
</dbReference>
<accession>Q8XV90</accession>
<proteinExistence type="inferred from homology"/>
<comment type="function">
    <text evidence="1">Part of the twin-arginine translocation (Tat) system that transports large folded proteins containing a characteristic twin-arginine motif in their signal peptide across membranes. Together with TatC, TatB is part of a receptor directly interacting with Tat signal peptides. TatB may form an oligomeric binding site that transiently accommodates folded Tat precursor proteins before their translocation.</text>
</comment>
<comment type="subunit">
    <text evidence="1">The Tat system comprises two distinct complexes: a TatABC complex, containing multiple copies of TatA, TatB and TatC subunits, and a separate TatA complex, containing only TatA subunits. Substrates initially bind to the TatABC complex, which probably triggers association of the separate TatA complex to form the active translocon.</text>
</comment>
<comment type="subcellular location">
    <subcellularLocation>
        <location evidence="1">Cell inner membrane</location>
        <topology evidence="1">Single-pass membrane protein</topology>
    </subcellularLocation>
</comment>
<comment type="similarity">
    <text evidence="1">Belongs to the TatB family.</text>
</comment>
<sequence length="172" mass="19459">MIDLGISKLALIGAVALVVIGPERLPKVARTAGALIGRAQRYIADVKAEVSREIELEELRKMRTEFEEAARNVEQTIHQEVSRHTSEINERLNEALGDPASRQTATQAAEWRPAPAKSRNGRNSWRNKQLAMPKWYRRKQGVRMWAQSGAARVKRHRPPIVAAQSRGRSFFE</sequence>
<evidence type="ECO:0000255" key="1">
    <source>
        <dbReference type="HAMAP-Rule" id="MF_00237"/>
    </source>
</evidence>
<evidence type="ECO:0000256" key="2">
    <source>
        <dbReference type="SAM" id="MobiDB-lite"/>
    </source>
</evidence>